<dbReference type="EC" id="4.1.2.4" evidence="1"/>
<dbReference type="EMBL" id="AE007317">
    <property type="protein sequence ID" value="AAK99549.1"/>
    <property type="molecule type" value="Genomic_DNA"/>
</dbReference>
<dbReference type="PIR" id="A97965">
    <property type="entry name" value="A97965"/>
</dbReference>
<dbReference type="RefSeq" id="NP_358339.1">
    <property type="nucleotide sequence ID" value="NC_003098.1"/>
</dbReference>
<dbReference type="RefSeq" id="WP_000773685.1">
    <property type="nucleotide sequence ID" value="NC_003098.1"/>
</dbReference>
<dbReference type="SMR" id="Q8DQC4"/>
<dbReference type="STRING" id="171101.spr0745"/>
<dbReference type="KEGG" id="spr:spr0745"/>
<dbReference type="PATRIC" id="fig|171101.6.peg.825"/>
<dbReference type="eggNOG" id="COG0274">
    <property type="taxonomic scope" value="Bacteria"/>
</dbReference>
<dbReference type="HOGENOM" id="CLU_053595_0_0_9"/>
<dbReference type="UniPathway" id="UPA00002">
    <property type="reaction ID" value="UER00468"/>
</dbReference>
<dbReference type="Proteomes" id="UP000000586">
    <property type="component" value="Chromosome"/>
</dbReference>
<dbReference type="GO" id="GO:0005737">
    <property type="term" value="C:cytoplasm"/>
    <property type="evidence" value="ECO:0007669"/>
    <property type="project" value="UniProtKB-SubCell"/>
</dbReference>
<dbReference type="GO" id="GO:0004139">
    <property type="term" value="F:deoxyribose-phosphate aldolase activity"/>
    <property type="evidence" value="ECO:0000318"/>
    <property type="project" value="GO_Central"/>
</dbReference>
<dbReference type="GO" id="GO:0006018">
    <property type="term" value="P:2-deoxyribose 1-phosphate catabolic process"/>
    <property type="evidence" value="ECO:0007669"/>
    <property type="project" value="UniProtKB-UniRule"/>
</dbReference>
<dbReference type="GO" id="GO:0016052">
    <property type="term" value="P:carbohydrate catabolic process"/>
    <property type="evidence" value="ECO:0000318"/>
    <property type="project" value="GO_Central"/>
</dbReference>
<dbReference type="GO" id="GO:0009264">
    <property type="term" value="P:deoxyribonucleotide catabolic process"/>
    <property type="evidence" value="ECO:0000318"/>
    <property type="project" value="GO_Central"/>
</dbReference>
<dbReference type="CDD" id="cd00959">
    <property type="entry name" value="DeoC"/>
    <property type="match status" value="1"/>
</dbReference>
<dbReference type="FunFam" id="3.20.20.70:FF:000044">
    <property type="entry name" value="Deoxyribose-phosphate aldolase"/>
    <property type="match status" value="1"/>
</dbReference>
<dbReference type="Gene3D" id="3.20.20.70">
    <property type="entry name" value="Aldolase class I"/>
    <property type="match status" value="1"/>
</dbReference>
<dbReference type="HAMAP" id="MF_00114">
    <property type="entry name" value="DeoC_type1"/>
    <property type="match status" value="1"/>
</dbReference>
<dbReference type="InterPro" id="IPR013785">
    <property type="entry name" value="Aldolase_TIM"/>
</dbReference>
<dbReference type="InterPro" id="IPR011343">
    <property type="entry name" value="DeoC"/>
</dbReference>
<dbReference type="InterPro" id="IPR002915">
    <property type="entry name" value="DeoC/FbaB/LacD_aldolase"/>
</dbReference>
<dbReference type="InterPro" id="IPR028581">
    <property type="entry name" value="DeoC_typeI"/>
</dbReference>
<dbReference type="NCBIfam" id="TIGR00126">
    <property type="entry name" value="deoC"/>
    <property type="match status" value="1"/>
</dbReference>
<dbReference type="PANTHER" id="PTHR10889">
    <property type="entry name" value="DEOXYRIBOSE-PHOSPHATE ALDOLASE"/>
    <property type="match status" value="1"/>
</dbReference>
<dbReference type="PANTHER" id="PTHR10889:SF1">
    <property type="entry name" value="DEOXYRIBOSE-PHOSPHATE ALDOLASE"/>
    <property type="match status" value="1"/>
</dbReference>
<dbReference type="Pfam" id="PF01791">
    <property type="entry name" value="DeoC"/>
    <property type="match status" value="1"/>
</dbReference>
<dbReference type="PIRSF" id="PIRSF001357">
    <property type="entry name" value="DeoC"/>
    <property type="match status" value="1"/>
</dbReference>
<dbReference type="SMART" id="SM01133">
    <property type="entry name" value="DeoC"/>
    <property type="match status" value="1"/>
</dbReference>
<dbReference type="SUPFAM" id="SSF51569">
    <property type="entry name" value="Aldolase"/>
    <property type="match status" value="1"/>
</dbReference>
<comment type="function">
    <text evidence="1">Catalyzes a reversible aldol reaction between acetaldehyde and D-glyceraldehyde 3-phosphate to generate 2-deoxy-D-ribose 5-phosphate.</text>
</comment>
<comment type="catalytic activity">
    <reaction evidence="1">
        <text>2-deoxy-D-ribose 5-phosphate = D-glyceraldehyde 3-phosphate + acetaldehyde</text>
        <dbReference type="Rhea" id="RHEA:12821"/>
        <dbReference type="ChEBI" id="CHEBI:15343"/>
        <dbReference type="ChEBI" id="CHEBI:59776"/>
        <dbReference type="ChEBI" id="CHEBI:62877"/>
        <dbReference type="EC" id="4.1.2.4"/>
    </reaction>
</comment>
<comment type="pathway">
    <text evidence="1">Carbohydrate degradation; 2-deoxy-D-ribose 1-phosphate degradation; D-glyceraldehyde 3-phosphate and acetaldehyde from 2-deoxy-alpha-D-ribose 1-phosphate: step 2/2.</text>
</comment>
<comment type="subcellular location">
    <subcellularLocation>
        <location evidence="1">Cytoplasm</location>
    </subcellularLocation>
</comment>
<comment type="similarity">
    <text evidence="1">Belongs to the DeoC/FbaB aldolase family. DeoC type 1 subfamily.</text>
</comment>
<reference key="1">
    <citation type="journal article" date="2001" name="J. Bacteriol.">
        <title>Genome of the bacterium Streptococcus pneumoniae strain R6.</title>
        <authorList>
            <person name="Hoskins J."/>
            <person name="Alborn W.E. Jr."/>
            <person name="Arnold J."/>
            <person name="Blaszczak L.C."/>
            <person name="Burgett S."/>
            <person name="DeHoff B.S."/>
            <person name="Estrem S.T."/>
            <person name="Fritz L."/>
            <person name="Fu D.-J."/>
            <person name="Fuller W."/>
            <person name="Geringer C."/>
            <person name="Gilmour R."/>
            <person name="Glass J.S."/>
            <person name="Khoja H."/>
            <person name="Kraft A.R."/>
            <person name="Lagace R.E."/>
            <person name="LeBlanc D.J."/>
            <person name="Lee L.N."/>
            <person name="Lefkowitz E.J."/>
            <person name="Lu J."/>
            <person name="Matsushima P."/>
            <person name="McAhren S.M."/>
            <person name="McHenney M."/>
            <person name="McLeaster K."/>
            <person name="Mundy C.W."/>
            <person name="Nicas T.I."/>
            <person name="Norris F.H."/>
            <person name="O'Gara M."/>
            <person name="Peery R.B."/>
            <person name="Robertson G.T."/>
            <person name="Rockey P."/>
            <person name="Sun P.-M."/>
            <person name="Winkler M.E."/>
            <person name="Yang Y."/>
            <person name="Young-Bellido M."/>
            <person name="Zhao G."/>
            <person name="Zook C.A."/>
            <person name="Baltz R.H."/>
            <person name="Jaskunas S.R."/>
            <person name="Rosteck P.R. Jr."/>
            <person name="Skatrud P.L."/>
            <person name="Glass J.I."/>
        </authorList>
    </citation>
    <scope>NUCLEOTIDE SEQUENCE [LARGE SCALE GENOMIC DNA]</scope>
    <source>
        <strain>ATCC BAA-255 / R6</strain>
    </source>
</reference>
<gene>
    <name evidence="1" type="primary">deoC</name>
    <name type="ordered locus">spr0745</name>
</gene>
<name>DEOC_STRR6</name>
<evidence type="ECO:0000255" key="1">
    <source>
        <dbReference type="HAMAP-Rule" id="MF_00114"/>
    </source>
</evidence>
<feature type="chain" id="PRO_0000057273" description="Deoxyribose-phosphate aldolase">
    <location>
        <begin position="1"/>
        <end position="220"/>
    </location>
</feature>
<feature type="active site" description="Proton donor/acceptor" evidence="1">
    <location>
        <position position="89"/>
    </location>
</feature>
<feature type="active site" description="Schiff-base intermediate with acetaldehyde" evidence="1">
    <location>
        <position position="151"/>
    </location>
</feature>
<feature type="active site" description="Proton donor/acceptor" evidence="1">
    <location>
        <position position="180"/>
    </location>
</feature>
<accession>Q8DQC4</accession>
<organism>
    <name type="scientific">Streptococcus pneumoniae (strain ATCC BAA-255 / R6)</name>
    <dbReference type="NCBI Taxonomy" id="171101"/>
    <lineage>
        <taxon>Bacteria</taxon>
        <taxon>Bacillati</taxon>
        <taxon>Bacillota</taxon>
        <taxon>Bacilli</taxon>
        <taxon>Lactobacillales</taxon>
        <taxon>Streptococcaceae</taxon>
        <taxon>Streptococcus</taxon>
    </lineage>
</organism>
<keyword id="KW-0963">Cytoplasm</keyword>
<keyword id="KW-0456">Lyase</keyword>
<keyword id="KW-1185">Reference proteome</keyword>
<keyword id="KW-0704">Schiff base</keyword>
<proteinExistence type="inferred from homology"/>
<protein>
    <recommendedName>
        <fullName evidence="1">Deoxyribose-phosphate aldolase</fullName>
        <shortName evidence="1">DERA</shortName>
        <ecNumber evidence="1">4.1.2.4</ecNumber>
    </recommendedName>
    <alternativeName>
        <fullName evidence="1">2-deoxy-D-ribose 5-phosphate aldolase</fullName>
    </alternativeName>
    <alternativeName>
        <fullName evidence="1">Phosphodeoxyriboaldolase</fullName>
        <shortName evidence="1">Deoxyriboaldolase</shortName>
    </alternativeName>
</protein>
<sequence length="220" mass="22960">MKLNKYIDHTLLKQDAKKKQIDSLLSEAREYGFASVCVNPTWVEHAKKGLEGTDVKVCTVVGFPLGATTSAVKAFETKEAIQNGADEIDMVINVGALKSGNLALVESDIRAVVEASGDKLVKVIIEACLLTDQEKIVVCQLAQKAGADFVKTSTGFSTGGATIADVTLMRETVGSDMGVKAAGGARSYADALAFVEAGATRIGTSAGVAILKGELADGDY</sequence>